<organism>
    <name type="scientific">Neisseria meningitidis serogroup A / serotype 4A (strain DSM 15465 / Z2491)</name>
    <dbReference type="NCBI Taxonomy" id="122587"/>
    <lineage>
        <taxon>Bacteria</taxon>
        <taxon>Pseudomonadati</taxon>
        <taxon>Pseudomonadota</taxon>
        <taxon>Betaproteobacteria</taxon>
        <taxon>Neisseriales</taxon>
        <taxon>Neisseriaceae</taxon>
        <taxon>Neisseria</taxon>
    </lineage>
</organism>
<comment type="function">
    <text evidence="1">Probably functions as a manganese efflux pump.</text>
</comment>
<comment type="subcellular location">
    <subcellularLocation>
        <location evidence="1">Cell inner membrane</location>
        <topology evidence="1">Multi-pass membrane protein</topology>
    </subcellularLocation>
</comment>
<comment type="similarity">
    <text evidence="1">Belongs to the MntP (TC 9.B.29) family.</text>
</comment>
<name>MNTP_NEIMA</name>
<reference key="1">
    <citation type="journal article" date="2000" name="Nature">
        <title>Complete DNA sequence of a serogroup A strain of Neisseria meningitidis Z2491.</title>
        <authorList>
            <person name="Parkhill J."/>
            <person name="Achtman M."/>
            <person name="James K.D."/>
            <person name="Bentley S.D."/>
            <person name="Churcher C.M."/>
            <person name="Klee S.R."/>
            <person name="Morelli G."/>
            <person name="Basham D."/>
            <person name="Brown D."/>
            <person name="Chillingworth T."/>
            <person name="Davies R.M."/>
            <person name="Davis P."/>
            <person name="Devlin K."/>
            <person name="Feltwell T."/>
            <person name="Hamlin N."/>
            <person name="Holroyd S."/>
            <person name="Jagels K."/>
            <person name="Leather S."/>
            <person name="Moule S."/>
            <person name="Mungall K.L."/>
            <person name="Quail M.A."/>
            <person name="Rajandream M.A."/>
            <person name="Rutherford K.M."/>
            <person name="Simmonds M."/>
            <person name="Skelton J."/>
            <person name="Whitehead S."/>
            <person name="Spratt B.G."/>
            <person name="Barrell B.G."/>
        </authorList>
    </citation>
    <scope>NUCLEOTIDE SEQUENCE [LARGE SCALE GENOMIC DNA]</scope>
    <source>
        <strain>DSM 15465 / Z2491</strain>
    </source>
</reference>
<sequence>MGFYALLLIALGMSMDAFAVALAKGAAVRMPPRKIAATALVFGSVEALTPLAGWVGGFYAKPFISEWDHWAAFVLLGGLGLKMMREGLSGKAEDVRESKRESLWMTVLTAFGTSIDSMIVGVGLAFMEVNIAFAAAIIGMATTVMVAVGLAAGGALGGLFGKRAEFAGGLVLIAIGTWTLLSHLGLIG</sequence>
<keyword id="KW-0997">Cell inner membrane</keyword>
<keyword id="KW-1003">Cell membrane</keyword>
<keyword id="KW-0406">Ion transport</keyword>
<keyword id="KW-0464">Manganese</keyword>
<keyword id="KW-0472">Membrane</keyword>
<keyword id="KW-0812">Transmembrane</keyword>
<keyword id="KW-1133">Transmembrane helix</keyword>
<keyword id="KW-0813">Transport</keyword>
<accession>Q9JX59</accession>
<accession>A1INR7</accession>
<proteinExistence type="inferred from homology"/>
<protein>
    <recommendedName>
        <fullName evidence="1">Putative manganese efflux pump MntP</fullName>
    </recommendedName>
</protein>
<dbReference type="EMBL" id="AL157959">
    <property type="protein sequence ID" value="CAM07374.1"/>
    <property type="molecule type" value="Genomic_DNA"/>
</dbReference>
<dbReference type="PIR" id="E81996">
    <property type="entry name" value="E81996"/>
</dbReference>
<dbReference type="RefSeq" id="WP_002245810.1">
    <property type="nucleotide sequence ID" value="NC_003116.1"/>
</dbReference>
<dbReference type="EnsemblBacteria" id="CAM07374">
    <property type="protein sequence ID" value="CAM07374"/>
    <property type="gene ID" value="NMA0052"/>
</dbReference>
<dbReference type="KEGG" id="nma:NMA0052"/>
<dbReference type="HOGENOM" id="CLU_096410_0_0_4"/>
<dbReference type="Proteomes" id="UP000000626">
    <property type="component" value="Chromosome"/>
</dbReference>
<dbReference type="GO" id="GO:0005886">
    <property type="term" value="C:plasma membrane"/>
    <property type="evidence" value="ECO:0007669"/>
    <property type="project" value="UniProtKB-SubCell"/>
</dbReference>
<dbReference type="GO" id="GO:0005384">
    <property type="term" value="F:manganese ion transmembrane transporter activity"/>
    <property type="evidence" value="ECO:0007669"/>
    <property type="project" value="UniProtKB-UniRule"/>
</dbReference>
<dbReference type="HAMAP" id="MF_01521">
    <property type="entry name" value="MntP_pump"/>
    <property type="match status" value="1"/>
</dbReference>
<dbReference type="InterPro" id="IPR003810">
    <property type="entry name" value="Mntp/YtaF"/>
</dbReference>
<dbReference type="InterPro" id="IPR022929">
    <property type="entry name" value="Put_MntP"/>
</dbReference>
<dbReference type="PANTHER" id="PTHR35529">
    <property type="entry name" value="MANGANESE EFFLUX PUMP MNTP-RELATED"/>
    <property type="match status" value="1"/>
</dbReference>
<dbReference type="PANTHER" id="PTHR35529:SF1">
    <property type="entry name" value="MANGANESE EFFLUX PUMP MNTP-RELATED"/>
    <property type="match status" value="1"/>
</dbReference>
<dbReference type="Pfam" id="PF02659">
    <property type="entry name" value="Mntp"/>
    <property type="match status" value="1"/>
</dbReference>
<feature type="chain" id="PRO_0000155657" description="Putative manganese efflux pump MntP">
    <location>
        <begin position="1"/>
        <end position="188"/>
    </location>
</feature>
<feature type="transmembrane region" description="Helical" evidence="1">
    <location>
        <begin position="3"/>
        <end position="23"/>
    </location>
</feature>
<feature type="transmembrane region" description="Helical" evidence="1">
    <location>
        <begin position="35"/>
        <end position="55"/>
    </location>
</feature>
<feature type="transmembrane region" description="Helical" evidence="1">
    <location>
        <begin position="63"/>
        <end position="83"/>
    </location>
</feature>
<feature type="transmembrane region" description="Helical" evidence="1">
    <location>
        <begin position="107"/>
        <end position="127"/>
    </location>
</feature>
<feature type="transmembrane region" description="Helical" evidence="1">
    <location>
        <begin position="131"/>
        <end position="151"/>
    </location>
</feature>
<feature type="transmembrane region" description="Helical" evidence="1">
    <location>
        <begin position="167"/>
        <end position="187"/>
    </location>
</feature>
<evidence type="ECO:0000255" key="1">
    <source>
        <dbReference type="HAMAP-Rule" id="MF_01521"/>
    </source>
</evidence>
<gene>
    <name evidence="1" type="primary">mntP</name>
    <name type="ordered locus">NMA0052</name>
</gene>